<dbReference type="EMBL" id="CU928168">
    <property type="protein sequence ID" value="CAR22530.1"/>
    <property type="molecule type" value="Genomic_DNA"/>
</dbReference>
<dbReference type="RefSeq" id="XP_002552968.1">
    <property type="nucleotide sequence ID" value="XM_002552922.1"/>
</dbReference>
<dbReference type="FunCoup" id="C5DGI8">
    <property type="interactions" value="128"/>
</dbReference>
<dbReference type="STRING" id="559295.C5DGI8"/>
<dbReference type="GeneID" id="8295196"/>
<dbReference type="KEGG" id="lth:KLTH0D05654g"/>
<dbReference type="eggNOG" id="ENOG502QQMN">
    <property type="taxonomic scope" value="Eukaryota"/>
</dbReference>
<dbReference type="HOGENOM" id="CLU_060779_0_0_1"/>
<dbReference type="InParanoid" id="C5DGI8"/>
<dbReference type="OMA" id="WFACAEP"/>
<dbReference type="OrthoDB" id="5582146at2759"/>
<dbReference type="Proteomes" id="UP000002036">
    <property type="component" value="Chromosome D"/>
</dbReference>
<dbReference type="Gene3D" id="1.10.8.80">
    <property type="entry name" value="Magnesium chelatase subunit I, C-Terminal domain"/>
    <property type="match status" value="1"/>
</dbReference>
<comment type="function">
    <text evidence="1">May be involved in telomere capping.</text>
</comment>
<comment type="similarity">
    <text evidence="2">Belongs to the MTC2 family.</text>
</comment>
<organism>
    <name type="scientific">Lachancea thermotolerans (strain ATCC 56472 / CBS 6340 / NRRL Y-8284)</name>
    <name type="common">Yeast</name>
    <name type="synonym">Kluyveromyces thermotolerans</name>
    <dbReference type="NCBI Taxonomy" id="559295"/>
    <lineage>
        <taxon>Eukaryota</taxon>
        <taxon>Fungi</taxon>
        <taxon>Dikarya</taxon>
        <taxon>Ascomycota</taxon>
        <taxon>Saccharomycotina</taxon>
        <taxon>Saccharomycetes</taxon>
        <taxon>Saccharomycetales</taxon>
        <taxon>Saccharomycetaceae</taxon>
        <taxon>Lachancea</taxon>
    </lineage>
</organism>
<keyword id="KW-1185">Reference proteome</keyword>
<accession>C5DGI8</accession>
<gene>
    <name type="primary">MTC2</name>
    <name type="ordered locus">KLTH0D05654g</name>
</gene>
<reference key="1">
    <citation type="journal article" date="2009" name="Genome Res.">
        <title>Comparative genomics of protoploid Saccharomycetaceae.</title>
        <authorList>
            <consortium name="The Genolevures Consortium"/>
            <person name="Souciet J.-L."/>
            <person name="Dujon B."/>
            <person name="Gaillardin C."/>
            <person name="Johnston M."/>
            <person name="Baret P.V."/>
            <person name="Cliften P."/>
            <person name="Sherman D.J."/>
            <person name="Weissenbach J."/>
            <person name="Westhof E."/>
            <person name="Wincker P."/>
            <person name="Jubin C."/>
            <person name="Poulain J."/>
            <person name="Barbe V."/>
            <person name="Segurens B."/>
            <person name="Artiguenave F."/>
            <person name="Anthouard V."/>
            <person name="Vacherie B."/>
            <person name="Val M.-E."/>
            <person name="Fulton R.S."/>
            <person name="Minx P."/>
            <person name="Wilson R."/>
            <person name="Durrens P."/>
            <person name="Jean G."/>
            <person name="Marck C."/>
            <person name="Martin T."/>
            <person name="Nikolski M."/>
            <person name="Rolland T."/>
            <person name="Seret M.-L."/>
            <person name="Casaregola S."/>
            <person name="Despons L."/>
            <person name="Fairhead C."/>
            <person name="Fischer G."/>
            <person name="Lafontaine I."/>
            <person name="Leh V."/>
            <person name="Lemaire M."/>
            <person name="de Montigny J."/>
            <person name="Neuveglise C."/>
            <person name="Thierry A."/>
            <person name="Blanc-Lenfle I."/>
            <person name="Bleykasten C."/>
            <person name="Diffels J."/>
            <person name="Fritsch E."/>
            <person name="Frangeul L."/>
            <person name="Goeffon A."/>
            <person name="Jauniaux N."/>
            <person name="Kachouri-Lafond R."/>
            <person name="Payen C."/>
            <person name="Potier S."/>
            <person name="Pribylova L."/>
            <person name="Ozanne C."/>
            <person name="Richard G.-F."/>
            <person name="Sacerdot C."/>
            <person name="Straub M.-L."/>
            <person name="Talla E."/>
        </authorList>
    </citation>
    <scope>NUCLEOTIDE SEQUENCE [LARGE SCALE GENOMIC DNA]</scope>
    <source>
        <strain>ATCC 56472 / CBS 6340 / NRRL Y-8284</strain>
    </source>
</reference>
<proteinExistence type="inferred from homology"/>
<name>MTC2_LACTC</name>
<feature type="chain" id="PRO_0000407763" description="Maintenance of telomere capping protein 2">
    <location>
        <begin position="1"/>
        <end position="285"/>
    </location>
</feature>
<protein>
    <recommendedName>
        <fullName>Maintenance of telomere capping protein 2</fullName>
    </recommendedName>
</protein>
<sequence length="285" mass="32501">MSGQEPSLPPMGPTLPAALAFRKNLVCYCEDPTVVVEFLQALHLPYALWENYDDIDARPKPEAEQVLVLPNVDRLLTLQQDKLAKFLQVMRSRDTPFFAAVATVSPGFVPYAHFTPYLKRQFWFACAEPMTGGATDFNEETLPQLRNSLRKVHVHHSIRRYVLDIIMHLRVHRFSSQASGGGCSTHSLRDILELCQTLALAEERAFVVPDIVKTASYWYFPFHLELIQNPSHEISLQYGSDPDLVAQLVNAMQQFSLQRASEIHYPLYFQYMVLRDVLNLVVPAI</sequence>
<evidence type="ECO:0000250" key="1"/>
<evidence type="ECO:0000305" key="2"/>